<proteinExistence type="inferred from homology"/>
<keyword id="KW-0143">Chaperone</keyword>
<keyword id="KW-0963">Cytoplasm</keyword>
<keyword id="KW-0653">Protein transport</keyword>
<keyword id="KW-0811">Translocation</keyword>
<keyword id="KW-0813">Transport</keyword>
<name>SECB_ACIBT</name>
<organism>
    <name type="scientific">Acinetobacter baumannii (strain ATCC 17978 / DSM 105126 / CIP 53.77 / LMG 1025 / NCDC KC755 / 5377)</name>
    <dbReference type="NCBI Taxonomy" id="400667"/>
    <lineage>
        <taxon>Bacteria</taxon>
        <taxon>Pseudomonadati</taxon>
        <taxon>Pseudomonadota</taxon>
        <taxon>Gammaproteobacteria</taxon>
        <taxon>Moraxellales</taxon>
        <taxon>Moraxellaceae</taxon>
        <taxon>Acinetobacter</taxon>
        <taxon>Acinetobacter calcoaceticus/baumannii complex</taxon>
    </lineage>
</organism>
<dbReference type="EMBL" id="CP000521">
    <property type="protein sequence ID" value="ABO10981.1"/>
    <property type="molecule type" value="Genomic_DNA"/>
</dbReference>
<dbReference type="RefSeq" id="WP_001288260.1">
    <property type="nucleotide sequence ID" value="NZ_CP053098.1"/>
</dbReference>
<dbReference type="SMR" id="A3M237"/>
<dbReference type="GeneID" id="92892511"/>
<dbReference type="KEGG" id="acb:A1S_0528"/>
<dbReference type="HOGENOM" id="CLU_111574_1_0_6"/>
<dbReference type="GO" id="GO:0005737">
    <property type="term" value="C:cytoplasm"/>
    <property type="evidence" value="ECO:0007669"/>
    <property type="project" value="UniProtKB-SubCell"/>
</dbReference>
<dbReference type="GO" id="GO:0051082">
    <property type="term" value="F:unfolded protein binding"/>
    <property type="evidence" value="ECO:0007669"/>
    <property type="project" value="InterPro"/>
</dbReference>
<dbReference type="GO" id="GO:0006457">
    <property type="term" value="P:protein folding"/>
    <property type="evidence" value="ECO:0007669"/>
    <property type="project" value="UniProtKB-UniRule"/>
</dbReference>
<dbReference type="GO" id="GO:0051262">
    <property type="term" value="P:protein tetramerization"/>
    <property type="evidence" value="ECO:0007669"/>
    <property type="project" value="InterPro"/>
</dbReference>
<dbReference type="GO" id="GO:0015031">
    <property type="term" value="P:protein transport"/>
    <property type="evidence" value="ECO:0007669"/>
    <property type="project" value="UniProtKB-UniRule"/>
</dbReference>
<dbReference type="Gene3D" id="3.10.420.10">
    <property type="entry name" value="SecB-like"/>
    <property type="match status" value="1"/>
</dbReference>
<dbReference type="HAMAP" id="MF_00821">
    <property type="entry name" value="SecB"/>
    <property type="match status" value="1"/>
</dbReference>
<dbReference type="InterPro" id="IPR003708">
    <property type="entry name" value="SecB"/>
</dbReference>
<dbReference type="InterPro" id="IPR035958">
    <property type="entry name" value="SecB-like_sf"/>
</dbReference>
<dbReference type="NCBIfam" id="NF004393">
    <property type="entry name" value="PRK05751.1-4"/>
    <property type="match status" value="1"/>
</dbReference>
<dbReference type="NCBIfam" id="TIGR00809">
    <property type="entry name" value="secB"/>
    <property type="match status" value="1"/>
</dbReference>
<dbReference type="PANTHER" id="PTHR36918">
    <property type="match status" value="1"/>
</dbReference>
<dbReference type="PANTHER" id="PTHR36918:SF1">
    <property type="entry name" value="PROTEIN-EXPORT PROTEIN SECB"/>
    <property type="match status" value="1"/>
</dbReference>
<dbReference type="Pfam" id="PF02556">
    <property type="entry name" value="SecB"/>
    <property type="match status" value="1"/>
</dbReference>
<dbReference type="PRINTS" id="PR01594">
    <property type="entry name" value="SECBCHAPRONE"/>
</dbReference>
<dbReference type="SUPFAM" id="SSF54611">
    <property type="entry name" value="SecB-like"/>
    <property type="match status" value="1"/>
</dbReference>
<protein>
    <recommendedName>
        <fullName evidence="1">Protein-export protein SecB</fullName>
    </recommendedName>
</protein>
<feature type="chain" id="PRO_1000062446" description="Protein-export protein SecB">
    <location>
        <begin position="1"/>
        <end position="152"/>
    </location>
</feature>
<sequence length="152" mass="17030">MSEEQQVQPQLALERIYTKDISFEVPGAQVFTKQWQPELNINLSSAAEKIDPTHFEVSLKVVVQANNDNETAFIVDVTQSGIFLIDNIEEDRLPYILGAYCPNILFPFLREAVNDLVTKGSFPQLLLTPINFDAEFEANMQRAQAAAVEGQA</sequence>
<reference key="1">
    <citation type="journal article" date="2007" name="Genes Dev.">
        <title>New insights into Acinetobacter baumannii pathogenesis revealed by high-density pyrosequencing and transposon mutagenesis.</title>
        <authorList>
            <person name="Smith M.G."/>
            <person name="Gianoulis T.A."/>
            <person name="Pukatzki S."/>
            <person name="Mekalanos J.J."/>
            <person name="Ornston L.N."/>
            <person name="Gerstein M."/>
            <person name="Snyder M."/>
        </authorList>
    </citation>
    <scope>NUCLEOTIDE SEQUENCE [LARGE SCALE GENOMIC DNA]</scope>
    <source>
        <strain>ATCC 17978 / DSM 105126 / CIP 53.77 / LMG 1025 / NCDC KC755 / 5377</strain>
    </source>
</reference>
<evidence type="ECO:0000255" key="1">
    <source>
        <dbReference type="HAMAP-Rule" id="MF_00821"/>
    </source>
</evidence>
<accession>A3M237</accession>
<gene>
    <name evidence="1" type="primary">secB</name>
    <name type="ordered locus">A1S_0528</name>
</gene>
<comment type="function">
    <text evidence="1">One of the proteins required for the normal export of preproteins out of the cell cytoplasm. It is a molecular chaperone that binds to a subset of precursor proteins, maintaining them in a translocation-competent state. It also specifically binds to its receptor SecA.</text>
</comment>
<comment type="subunit">
    <text evidence="1">Homotetramer, a dimer of dimers. One homotetramer interacts with 1 SecA dimer.</text>
</comment>
<comment type="subcellular location">
    <subcellularLocation>
        <location evidence="1">Cytoplasm</location>
    </subcellularLocation>
</comment>
<comment type="similarity">
    <text evidence="1">Belongs to the SecB family.</text>
</comment>